<gene>
    <name type="primary">omt2</name>
    <name type="ORF">SPAC27D7.04</name>
</gene>
<keyword id="KW-0456">Lyase</keyword>
<keyword id="KW-1185">Reference proteome</keyword>
<comment type="function">
    <text evidence="1">Has a role in spore wall formation.</text>
</comment>
<comment type="catalytic activity">
    <reaction>
        <text>(4aS,6R)-4a-hydroxy-L-erythro-5,6,7,8-tetrahydrobiopterin = (6R)-L-erythro-6,7-dihydrobiopterin + H2O</text>
        <dbReference type="Rhea" id="RHEA:11920"/>
        <dbReference type="ChEBI" id="CHEBI:15377"/>
        <dbReference type="ChEBI" id="CHEBI:15642"/>
        <dbReference type="ChEBI" id="CHEBI:43120"/>
        <dbReference type="EC" id="4.2.1.96"/>
    </reaction>
</comment>
<comment type="subcellular location">
    <subcellularLocation>
        <location evidence="1">Spore wall</location>
    </subcellularLocation>
    <text>Inner spore wall.</text>
</comment>
<comment type="similarity">
    <text evidence="2">Belongs to the pterin-4-alpha-carbinolamine dehydratase family.</text>
</comment>
<feature type="chain" id="PRO_0000063063" description="Pterin-4-alpha-carbinolamine dehydratase">
    <location>
        <begin position="1"/>
        <end position="96"/>
    </location>
</feature>
<organism>
    <name type="scientific">Schizosaccharomyces pombe (strain 972 / ATCC 24843)</name>
    <name type="common">Fission yeast</name>
    <dbReference type="NCBI Taxonomy" id="284812"/>
    <lineage>
        <taxon>Eukaryota</taxon>
        <taxon>Fungi</taxon>
        <taxon>Dikarya</taxon>
        <taxon>Ascomycota</taxon>
        <taxon>Taphrinomycotina</taxon>
        <taxon>Schizosaccharomycetes</taxon>
        <taxon>Schizosaccharomycetales</taxon>
        <taxon>Schizosaccharomycetaceae</taxon>
        <taxon>Schizosaccharomyces</taxon>
    </lineage>
</organism>
<evidence type="ECO:0000269" key="1">
    <source>
    </source>
</evidence>
<evidence type="ECO:0000305" key="2"/>
<reference key="1">
    <citation type="journal article" date="2003" name="Genes Cells">
        <title>Overlapping omt1+ and omt2+ genes are required for spore wall maturation in Schizosaccharomyces pombe.</title>
        <authorList>
            <person name="Kakihara Y."/>
            <person name="Nabeshima K."/>
            <person name="Hirata A."/>
            <person name="Nojima H."/>
        </authorList>
    </citation>
    <scope>NUCLEOTIDE SEQUENCE [GENOMIC DNA]</scope>
    <scope>FUNCTION</scope>
    <scope>SUBCELLULAR LOCATION</scope>
</reference>
<reference key="2">
    <citation type="journal article" date="2002" name="Nature">
        <title>The genome sequence of Schizosaccharomyces pombe.</title>
        <authorList>
            <person name="Wood V."/>
            <person name="Gwilliam R."/>
            <person name="Rajandream M.A."/>
            <person name="Lyne M.H."/>
            <person name="Lyne R."/>
            <person name="Stewart A."/>
            <person name="Sgouros J.G."/>
            <person name="Peat N."/>
            <person name="Hayles J."/>
            <person name="Baker S.G."/>
            <person name="Basham D."/>
            <person name="Bowman S."/>
            <person name="Brooks K."/>
            <person name="Brown D."/>
            <person name="Brown S."/>
            <person name="Chillingworth T."/>
            <person name="Churcher C.M."/>
            <person name="Collins M."/>
            <person name="Connor R."/>
            <person name="Cronin A."/>
            <person name="Davis P."/>
            <person name="Feltwell T."/>
            <person name="Fraser A."/>
            <person name="Gentles S."/>
            <person name="Goble A."/>
            <person name="Hamlin N."/>
            <person name="Harris D.E."/>
            <person name="Hidalgo J."/>
            <person name="Hodgson G."/>
            <person name="Holroyd S."/>
            <person name="Hornsby T."/>
            <person name="Howarth S."/>
            <person name="Huckle E.J."/>
            <person name="Hunt S."/>
            <person name="Jagels K."/>
            <person name="James K.D."/>
            <person name="Jones L."/>
            <person name="Jones M."/>
            <person name="Leather S."/>
            <person name="McDonald S."/>
            <person name="McLean J."/>
            <person name="Mooney P."/>
            <person name="Moule S."/>
            <person name="Mungall K.L."/>
            <person name="Murphy L.D."/>
            <person name="Niblett D."/>
            <person name="Odell C."/>
            <person name="Oliver K."/>
            <person name="O'Neil S."/>
            <person name="Pearson D."/>
            <person name="Quail M.A."/>
            <person name="Rabbinowitsch E."/>
            <person name="Rutherford K.M."/>
            <person name="Rutter S."/>
            <person name="Saunders D."/>
            <person name="Seeger K."/>
            <person name="Sharp S."/>
            <person name="Skelton J."/>
            <person name="Simmonds M.N."/>
            <person name="Squares R."/>
            <person name="Squares S."/>
            <person name="Stevens K."/>
            <person name="Taylor K."/>
            <person name="Taylor R.G."/>
            <person name="Tivey A."/>
            <person name="Walsh S.V."/>
            <person name="Warren T."/>
            <person name="Whitehead S."/>
            <person name="Woodward J.R."/>
            <person name="Volckaert G."/>
            <person name="Aert R."/>
            <person name="Robben J."/>
            <person name="Grymonprez B."/>
            <person name="Weltjens I."/>
            <person name="Vanstreels E."/>
            <person name="Rieger M."/>
            <person name="Schaefer M."/>
            <person name="Mueller-Auer S."/>
            <person name="Gabel C."/>
            <person name="Fuchs M."/>
            <person name="Duesterhoeft A."/>
            <person name="Fritzc C."/>
            <person name="Holzer E."/>
            <person name="Moestl D."/>
            <person name="Hilbert H."/>
            <person name="Borzym K."/>
            <person name="Langer I."/>
            <person name="Beck A."/>
            <person name="Lehrach H."/>
            <person name="Reinhardt R."/>
            <person name="Pohl T.M."/>
            <person name="Eger P."/>
            <person name="Zimmermann W."/>
            <person name="Wedler H."/>
            <person name="Wambutt R."/>
            <person name="Purnelle B."/>
            <person name="Goffeau A."/>
            <person name="Cadieu E."/>
            <person name="Dreano S."/>
            <person name="Gloux S."/>
            <person name="Lelaure V."/>
            <person name="Mottier S."/>
            <person name="Galibert F."/>
            <person name="Aves S.J."/>
            <person name="Xiang Z."/>
            <person name="Hunt C."/>
            <person name="Moore K."/>
            <person name="Hurst S.M."/>
            <person name="Lucas M."/>
            <person name="Rochet M."/>
            <person name="Gaillardin C."/>
            <person name="Tallada V.A."/>
            <person name="Garzon A."/>
            <person name="Thode G."/>
            <person name="Daga R.R."/>
            <person name="Cruzado L."/>
            <person name="Jimenez J."/>
            <person name="Sanchez M."/>
            <person name="del Rey F."/>
            <person name="Benito J."/>
            <person name="Dominguez A."/>
            <person name="Revuelta J.L."/>
            <person name="Moreno S."/>
            <person name="Armstrong J."/>
            <person name="Forsburg S.L."/>
            <person name="Cerutti L."/>
            <person name="Lowe T."/>
            <person name="McCombie W.R."/>
            <person name="Paulsen I."/>
            <person name="Potashkin J."/>
            <person name="Shpakovski G.V."/>
            <person name="Ussery D."/>
            <person name="Barrell B.G."/>
            <person name="Nurse P."/>
        </authorList>
    </citation>
    <scope>NUCLEOTIDE SEQUENCE [LARGE SCALE GENOMIC DNA]</scope>
    <source>
        <strain>972 / ATCC 24843</strain>
    </source>
</reference>
<accession>O42658</accession>
<sequence length="96" mass="11101">MNTSARLLALVSKSKNNWILQQGDTKLFKSFRFKNFIEAWGFMSCVALRAQQLNHHPEWTNVYNKVDITLTTHDTKGLTEKDLKLAEFIDTLAKDN</sequence>
<protein>
    <recommendedName>
        <fullName>Pterin-4-alpha-carbinolamine dehydratase</fullName>
        <shortName>PHS</shortName>
        <ecNumber>4.2.1.96</ecNumber>
    </recommendedName>
    <alternativeName>
        <fullName>4-alpha-hydroxy-tetrahydropterin dehydratase</fullName>
    </alternativeName>
    <alternativeName>
        <fullName>Overlapping meiotic transcript 2</fullName>
    </alternativeName>
    <alternativeName>
        <fullName>Pterin carbinolamine dehydratase</fullName>
        <shortName>PCD</shortName>
    </alternativeName>
</protein>
<name>PHS_SCHPO</name>
<proteinExistence type="inferred from homology"/>
<dbReference type="EC" id="4.2.1.96"/>
<dbReference type="EMBL" id="CU329670">
    <property type="protein sequence ID" value="CAA15823.1"/>
    <property type="molecule type" value="Genomic_DNA"/>
</dbReference>
<dbReference type="PIR" id="T38437">
    <property type="entry name" value="T38437"/>
</dbReference>
<dbReference type="RefSeq" id="NP_594610.1">
    <property type="nucleotide sequence ID" value="NM_001020038.4"/>
</dbReference>
<dbReference type="SMR" id="O42658"/>
<dbReference type="BioGRID" id="278114">
    <property type="interactions" value="12"/>
</dbReference>
<dbReference type="FunCoup" id="O42658">
    <property type="interactions" value="10"/>
</dbReference>
<dbReference type="IntAct" id="O42658">
    <property type="interactions" value="2"/>
</dbReference>
<dbReference type="STRING" id="284812.O42658"/>
<dbReference type="iPTMnet" id="O42658"/>
<dbReference type="PaxDb" id="4896-SPAC27D7.04.1"/>
<dbReference type="EnsemblFungi" id="SPAC27D7.04.1">
    <property type="protein sequence ID" value="SPAC27D7.04.1:pep"/>
    <property type="gene ID" value="SPAC27D7.04"/>
</dbReference>
<dbReference type="GeneID" id="2541617"/>
<dbReference type="KEGG" id="spo:2541617"/>
<dbReference type="PomBase" id="SPAC27D7.04">
    <property type="gene designation" value="omt2"/>
</dbReference>
<dbReference type="VEuPathDB" id="FungiDB:SPAC27D7.04"/>
<dbReference type="eggNOG" id="KOG4073">
    <property type="taxonomic scope" value="Eukaryota"/>
</dbReference>
<dbReference type="HOGENOM" id="CLU_081974_3_2_1"/>
<dbReference type="InParanoid" id="O42658"/>
<dbReference type="OMA" id="HHATMTI"/>
<dbReference type="PhylomeDB" id="O42658"/>
<dbReference type="Reactome" id="R-SPO-8964208">
    <property type="pathway name" value="Phenylalanine metabolism"/>
</dbReference>
<dbReference type="PRO" id="PR:O42658"/>
<dbReference type="Proteomes" id="UP000002485">
    <property type="component" value="Chromosome I"/>
</dbReference>
<dbReference type="GO" id="GO:0042764">
    <property type="term" value="C:ascospore-type prospore"/>
    <property type="evidence" value="ECO:0000314"/>
    <property type="project" value="PomBase"/>
</dbReference>
<dbReference type="GO" id="GO:0005829">
    <property type="term" value="C:cytosol"/>
    <property type="evidence" value="ECO:0007005"/>
    <property type="project" value="PomBase"/>
</dbReference>
<dbReference type="GO" id="GO:0005634">
    <property type="term" value="C:nucleus"/>
    <property type="evidence" value="ECO:0007005"/>
    <property type="project" value="PomBase"/>
</dbReference>
<dbReference type="GO" id="GO:0031160">
    <property type="term" value="C:spore wall"/>
    <property type="evidence" value="ECO:0007669"/>
    <property type="project" value="UniProtKB-SubCell"/>
</dbReference>
<dbReference type="GO" id="GO:0008124">
    <property type="term" value="F:4-alpha-hydroxytetrahydrobiopterin dehydratase activity"/>
    <property type="evidence" value="ECO:0000318"/>
    <property type="project" value="GO_Central"/>
</dbReference>
<dbReference type="GO" id="GO:0030437">
    <property type="term" value="P:ascospore formation"/>
    <property type="evidence" value="ECO:0000315"/>
    <property type="project" value="PomBase"/>
</dbReference>
<dbReference type="GO" id="GO:0006729">
    <property type="term" value="P:tetrahydrobiopterin biosynthetic process"/>
    <property type="evidence" value="ECO:0007669"/>
    <property type="project" value="InterPro"/>
</dbReference>
<dbReference type="CDD" id="cd00914">
    <property type="entry name" value="PCD_DCoH_subfamily_b"/>
    <property type="match status" value="1"/>
</dbReference>
<dbReference type="Gene3D" id="3.30.1360.20">
    <property type="entry name" value="Transcriptional coactivator/pterin dehydratase"/>
    <property type="match status" value="1"/>
</dbReference>
<dbReference type="HAMAP" id="MF_00434">
    <property type="entry name" value="Pterin_4_alpha"/>
    <property type="match status" value="1"/>
</dbReference>
<dbReference type="InterPro" id="IPR036428">
    <property type="entry name" value="PCD_sf"/>
</dbReference>
<dbReference type="InterPro" id="IPR001533">
    <property type="entry name" value="Pterin_deHydtase"/>
</dbReference>
<dbReference type="NCBIfam" id="NF002018">
    <property type="entry name" value="PRK00823.1-3"/>
    <property type="match status" value="1"/>
</dbReference>
<dbReference type="PANTHER" id="PTHR12599">
    <property type="entry name" value="PTERIN-4-ALPHA-CARBINOLAMINE DEHYDRATASE"/>
    <property type="match status" value="1"/>
</dbReference>
<dbReference type="PANTHER" id="PTHR12599:SF0">
    <property type="entry name" value="PTERIN-4-ALPHA-CARBINOLAMINE DEHYDRATASE"/>
    <property type="match status" value="1"/>
</dbReference>
<dbReference type="Pfam" id="PF01329">
    <property type="entry name" value="Pterin_4a"/>
    <property type="match status" value="1"/>
</dbReference>
<dbReference type="SUPFAM" id="SSF55248">
    <property type="entry name" value="PCD-like"/>
    <property type="match status" value="1"/>
</dbReference>